<comment type="similarity">
    <text evidence="2">Belongs to the class I-like SAM-binding methyltransferase superfamily. RNA M5U methyltransferase family.</text>
</comment>
<proteinExistence type="inferred from homology"/>
<feature type="chain" id="PRO_0000161994" description="Uncharacterized RNA methyltransferase LA_0098">
    <location>
        <begin position="1"/>
        <end position="415"/>
    </location>
</feature>
<feature type="active site" description="Nucleophile" evidence="2">
    <location>
        <position position="371"/>
    </location>
</feature>
<feature type="binding site" evidence="1">
    <location>
        <position position="85"/>
    </location>
    <ligand>
        <name>[4Fe-4S] cluster</name>
        <dbReference type="ChEBI" id="CHEBI:49883"/>
    </ligand>
</feature>
<feature type="binding site" evidence="1">
    <location>
        <position position="91"/>
    </location>
    <ligand>
        <name>[4Fe-4S] cluster</name>
        <dbReference type="ChEBI" id="CHEBI:49883"/>
    </ligand>
</feature>
<feature type="binding site" evidence="1">
    <location>
        <position position="94"/>
    </location>
    <ligand>
        <name>[4Fe-4S] cluster</name>
        <dbReference type="ChEBI" id="CHEBI:49883"/>
    </ligand>
</feature>
<feature type="binding site" evidence="1">
    <location>
        <position position="175"/>
    </location>
    <ligand>
        <name>[4Fe-4S] cluster</name>
        <dbReference type="ChEBI" id="CHEBI:49883"/>
    </ligand>
</feature>
<feature type="binding site" evidence="2">
    <location>
        <position position="248"/>
    </location>
    <ligand>
        <name>S-adenosyl-L-methionine</name>
        <dbReference type="ChEBI" id="CHEBI:59789"/>
    </ligand>
</feature>
<feature type="binding site" evidence="2">
    <location>
        <position position="276"/>
    </location>
    <ligand>
        <name>S-adenosyl-L-methionine</name>
        <dbReference type="ChEBI" id="CHEBI:59789"/>
    </ligand>
</feature>
<feature type="binding site" evidence="2">
    <location>
        <position position="297"/>
    </location>
    <ligand>
        <name>S-adenosyl-L-methionine</name>
        <dbReference type="ChEBI" id="CHEBI:59789"/>
    </ligand>
</feature>
<feature type="binding site" evidence="2">
    <location>
        <position position="344"/>
    </location>
    <ligand>
        <name>S-adenosyl-L-methionine</name>
        <dbReference type="ChEBI" id="CHEBI:59789"/>
    </ligand>
</feature>
<reference key="1">
    <citation type="journal article" date="2003" name="Nature">
        <title>Unique physiological and pathogenic features of Leptospira interrogans revealed by whole-genome sequencing.</title>
        <authorList>
            <person name="Ren S.-X."/>
            <person name="Fu G."/>
            <person name="Jiang X.-G."/>
            <person name="Zeng R."/>
            <person name="Miao Y.-G."/>
            <person name="Xu H."/>
            <person name="Zhang Y.-X."/>
            <person name="Xiong H."/>
            <person name="Lu G."/>
            <person name="Lu L.-F."/>
            <person name="Jiang H.-Q."/>
            <person name="Jia J."/>
            <person name="Tu Y.-F."/>
            <person name="Jiang J.-X."/>
            <person name="Gu W.-Y."/>
            <person name="Zhang Y.-Q."/>
            <person name="Cai Z."/>
            <person name="Sheng H.-H."/>
            <person name="Yin H.-F."/>
            <person name="Zhang Y."/>
            <person name="Zhu G.-F."/>
            <person name="Wan M."/>
            <person name="Huang H.-L."/>
            <person name="Qian Z."/>
            <person name="Wang S.-Y."/>
            <person name="Ma W."/>
            <person name="Yao Z.-J."/>
            <person name="Shen Y."/>
            <person name="Qiang B.-Q."/>
            <person name="Xia Q.-C."/>
            <person name="Guo X.-K."/>
            <person name="Danchin A."/>
            <person name="Saint Girons I."/>
            <person name="Somerville R.L."/>
            <person name="Wen Y.-M."/>
            <person name="Shi M.-H."/>
            <person name="Chen Z."/>
            <person name="Xu J.-G."/>
            <person name="Zhao G.-P."/>
        </authorList>
    </citation>
    <scope>NUCLEOTIDE SEQUENCE [LARGE SCALE GENOMIC DNA]</scope>
    <source>
        <strain>56601</strain>
    </source>
</reference>
<organism>
    <name type="scientific">Leptospira interrogans serogroup Icterohaemorrhagiae serovar Lai (strain 56601)</name>
    <dbReference type="NCBI Taxonomy" id="189518"/>
    <lineage>
        <taxon>Bacteria</taxon>
        <taxon>Pseudomonadati</taxon>
        <taxon>Spirochaetota</taxon>
        <taxon>Spirochaetia</taxon>
        <taxon>Leptospirales</taxon>
        <taxon>Leptospiraceae</taxon>
        <taxon>Leptospira</taxon>
    </lineage>
</organism>
<evidence type="ECO:0000250" key="1"/>
<evidence type="ECO:0000255" key="2">
    <source>
        <dbReference type="PROSITE-ProRule" id="PRU01024"/>
    </source>
</evidence>
<gene>
    <name type="ordered locus">LA_0098</name>
</gene>
<sequence length="415" mass="47180">MKSDSEGHKSSSKIQIHKGKILLKPRSWVNLGYSIANSEKETFFLKNAIPGETVDTVLLKRSGSLFWGVASEIQEVSSERIPSDCSIFPRCGGCSYRHVSYQKELEIKKFLLQETLEHFLSKKHIQIPEIEILSGDPNGYRNTAQIQLGFAGNQRLAGFYEEFSHSIVNLPEEGCKNLPQEMNFAFAEFLKQEVKGSKQILKSKTLSFRLEGTKVISYKKKSVSFSENIRIPELKRIVWEIPAGGFSQVNRYLIAPWLEKIFELVPNNQNRILELYCGSGLIAIALKSKTTSWLGYEISSDCVQQAKRNVLLNGISSCDFKTLNLETDWIDSEEVLNSSFWIMNPPRAGLSKKVLQTLIKTSPNGFLYSSCNHTTLVRDLSLFLNKDYKLSNVTLVDFFPRTKHFEVIVKVEKKD</sequence>
<dbReference type="EC" id="2.1.1.-"/>
<dbReference type="EMBL" id="AE010300">
    <property type="protein sequence ID" value="AAN47297.1"/>
    <property type="molecule type" value="Genomic_DNA"/>
</dbReference>
<dbReference type="RefSeq" id="NP_710279.1">
    <property type="nucleotide sequence ID" value="NC_004342.2"/>
</dbReference>
<dbReference type="RefSeq" id="WP_000834066.1">
    <property type="nucleotide sequence ID" value="NC_004342.2"/>
</dbReference>
<dbReference type="SMR" id="Q8F9U1"/>
<dbReference type="FunCoup" id="Q8F9U1">
    <property type="interactions" value="394"/>
</dbReference>
<dbReference type="STRING" id="189518.LA_0098"/>
<dbReference type="PaxDb" id="189518-LA_0098"/>
<dbReference type="EnsemblBacteria" id="AAN47297">
    <property type="protein sequence ID" value="AAN47297"/>
    <property type="gene ID" value="LA_0098"/>
</dbReference>
<dbReference type="KEGG" id="lil:LA_0098"/>
<dbReference type="PATRIC" id="fig|189518.3.peg.101"/>
<dbReference type="HOGENOM" id="CLU_014689_7_0_12"/>
<dbReference type="InParanoid" id="Q8F9U1"/>
<dbReference type="OrthoDB" id="9804590at2"/>
<dbReference type="Proteomes" id="UP000001408">
    <property type="component" value="Chromosome I"/>
</dbReference>
<dbReference type="GO" id="GO:0051539">
    <property type="term" value="F:4 iron, 4 sulfur cluster binding"/>
    <property type="evidence" value="ECO:0007669"/>
    <property type="project" value="UniProtKB-KW"/>
</dbReference>
<dbReference type="GO" id="GO:0046872">
    <property type="term" value="F:metal ion binding"/>
    <property type="evidence" value="ECO:0007669"/>
    <property type="project" value="UniProtKB-KW"/>
</dbReference>
<dbReference type="GO" id="GO:0070041">
    <property type="term" value="F:rRNA (uridine-C5-)-methyltransferase activity"/>
    <property type="evidence" value="ECO:0000318"/>
    <property type="project" value="GO_Central"/>
</dbReference>
<dbReference type="GO" id="GO:0070475">
    <property type="term" value="P:rRNA base methylation"/>
    <property type="evidence" value="ECO:0000318"/>
    <property type="project" value="GO_Central"/>
</dbReference>
<dbReference type="CDD" id="cd02440">
    <property type="entry name" value="AdoMet_MTases"/>
    <property type="match status" value="1"/>
</dbReference>
<dbReference type="Gene3D" id="2.40.50.1070">
    <property type="match status" value="1"/>
</dbReference>
<dbReference type="Gene3D" id="2.40.50.140">
    <property type="entry name" value="Nucleic acid-binding proteins"/>
    <property type="match status" value="1"/>
</dbReference>
<dbReference type="Gene3D" id="3.40.50.150">
    <property type="entry name" value="Vaccinia Virus protein VP39"/>
    <property type="match status" value="2"/>
</dbReference>
<dbReference type="InterPro" id="IPR030390">
    <property type="entry name" value="MeTrfase_TrmA_AS"/>
</dbReference>
<dbReference type="InterPro" id="IPR012340">
    <property type="entry name" value="NA-bd_OB-fold"/>
</dbReference>
<dbReference type="InterPro" id="IPR029063">
    <property type="entry name" value="SAM-dependent_MTases_sf"/>
</dbReference>
<dbReference type="InterPro" id="IPR010280">
    <property type="entry name" value="U5_MeTrfase_fam"/>
</dbReference>
<dbReference type="PANTHER" id="PTHR11061">
    <property type="entry name" value="RNA M5U METHYLTRANSFERASE"/>
    <property type="match status" value="1"/>
</dbReference>
<dbReference type="PANTHER" id="PTHR11061:SF30">
    <property type="entry name" value="TRNA (URACIL(54)-C(5))-METHYLTRANSFERASE"/>
    <property type="match status" value="1"/>
</dbReference>
<dbReference type="Pfam" id="PF05958">
    <property type="entry name" value="tRNA_U5-meth_tr"/>
    <property type="match status" value="1"/>
</dbReference>
<dbReference type="SUPFAM" id="SSF53335">
    <property type="entry name" value="S-adenosyl-L-methionine-dependent methyltransferases"/>
    <property type="match status" value="1"/>
</dbReference>
<dbReference type="PROSITE" id="PS51687">
    <property type="entry name" value="SAM_MT_RNA_M5U"/>
    <property type="match status" value="1"/>
</dbReference>
<dbReference type="PROSITE" id="PS01230">
    <property type="entry name" value="TRMA_1"/>
    <property type="match status" value="1"/>
</dbReference>
<accession>Q8F9U1</accession>
<keyword id="KW-0004">4Fe-4S</keyword>
<keyword id="KW-0408">Iron</keyword>
<keyword id="KW-0411">Iron-sulfur</keyword>
<keyword id="KW-0479">Metal-binding</keyword>
<keyword id="KW-0489">Methyltransferase</keyword>
<keyword id="KW-1185">Reference proteome</keyword>
<keyword id="KW-0949">S-adenosyl-L-methionine</keyword>
<keyword id="KW-0808">Transferase</keyword>
<protein>
    <recommendedName>
        <fullName>Uncharacterized RNA methyltransferase LA_0098</fullName>
        <ecNumber>2.1.1.-</ecNumber>
    </recommendedName>
</protein>
<name>Y098_LEPIN</name>